<comment type="function">
    <text evidence="1">This protein binds specifically to 23S rRNA; its binding is stimulated by other ribosomal proteins, e.g. L4, L17, and L20. It is important during the early stages of 50S assembly. It makes multiple contacts with different domains of the 23S rRNA in the assembled 50S subunit and ribosome (By similarity).</text>
</comment>
<comment type="function">
    <text evidence="1">The globular domain of the protein is located near the polypeptide exit tunnel on the outside of the subunit, while an extended beta-hairpin is found that lines the wall of the exit tunnel in the center of the 70S ribosome.</text>
</comment>
<comment type="subunit">
    <text evidence="1">Part of the 50S ribosomal subunit.</text>
</comment>
<comment type="similarity">
    <text evidence="1">Belongs to the universal ribosomal protein uL22 family.</text>
</comment>
<reference key="1">
    <citation type="journal article" date="2008" name="PLoS Genet.">
        <title>Complete genome sequence of the N2-fixing broad host range endophyte Klebsiella pneumoniae 342 and virulence predictions verified in mice.</title>
        <authorList>
            <person name="Fouts D.E."/>
            <person name="Tyler H.L."/>
            <person name="DeBoy R.T."/>
            <person name="Daugherty S."/>
            <person name="Ren Q."/>
            <person name="Badger J.H."/>
            <person name="Durkin A.S."/>
            <person name="Huot H."/>
            <person name="Shrivastava S."/>
            <person name="Kothari S."/>
            <person name="Dodson R.J."/>
            <person name="Mohamoud Y."/>
            <person name="Khouri H."/>
            <person name="Roesch L.F.W."/>
            <person name="Krogfelt K.A."/>
            <person name="Struve C."/>
            <person name="Triplett E.W."/>
            <person name="Methe B.A."/>
        </authorList>
    </citation>
    <scope>NUCLEOTIDE SEQUENCE [LARGE SCALE GENOMIC DNA]</scope>
    <source>
        <strain>342</strain>
    </source>
</reference>
<organism>
    <name type="scientific">Klebsiella pneumoniae (strain 342)</name>
    <dbReference type="NCBI Taxonomy" id="507522"/>
    <lineage>
        <taxon>Bacteria</taxon>
        <taxon>Pseudomonadati</taxon>
        <taxon>Pseudomonadota</taxon>
        <taxon>Gammaproteobacteria</taxon>
        <taxon>Enterobacterales</taxon>
        <taxon>Enterobacteriaceae</taxon>
        <taxon>Klebsiella/Raoultella group</taxon>
        <taxon>Klebsiella</taxon>
        <taxon>Klebsiella pneumoniae complex</taxon>
    </lineage>
</organism>
<proteinExistence type="inferred from homology"/>
<evidence type="ECO:0000255" key="1">
    <source>
        <dbReference type="HAMAP-Rule" id="MF_01331"/>
    </source>
</evidence>
<evidence type="ECO:0000305" key="2"/>
<dbReference type="EMBL" id="CP000964">
    <property type="protein sequence ID" value="ACI09926.1"/>
    <property type="molecule type" value="Genomic_DNA"/>
</dbReference>
<dbReference type="SMR" id="B5XN99"/>
<dbReference type="KEGG" id="kpe:KPK_0404"/>
<dbReference type="HOGENOM" id="CLU_083987_3_3_6"/>
<dbReference type="Proteomes" id="UP000001734">
    <property type="component" value="Chromosome"/>
</dbReference>
<dbReference type="GO" id="GO:0022625">
    <property type="term" value="C:cytosolic large ribosomal subunit"/>
    <property type="evidence" value="ECO:0007669"/>
    <property type="project" value="TreeGrafter"/>
</dbReference>
<dbReference type="GO" id="GO:0019843">
    <property type="term" value="F:rRNA binding"/>
    <property type="evidence" value="ECO:0007669"/>
    <property type="project" value="UniProtKB-UniRule"/>
</dbReference>
<dbReference type="GO" id="GO:0003735">
    <property type="term" value="F:structural constituent of ribosome"/>
    <property type="evidence" value="ECO:0007669"/>
    <property type="project" value="InterPro"/>
</dbReference>
<dbReference type="GO" id="GO:0006412">
    <property type="term" value="P:translation"/>
    <property type="evidence" value="ECO:0007669"/>
    <property type="project" value="UniProtKB-UniRule"/>
</dbReference>
<dbReference type="CDD" id="cd00336">
    <property type="entry name" value="Ribosomal_L22"/>
    <property type="match status" value="1"/>
</dbReference>
<dbReference type="FunFam" id="3.90.470.10:FF:000001">
    <property type="entry name" value="50S ribosomal protein L22"/>
    <property type="match status" value="1"/>
</dbReference>
<dbReference type="Gene3D" id="3.90.470.10">
    <property type="entry name" value="Ribosomal protein L22/L17"/>
    <property type="match status" value="1"/>
</dbReference>
<dbReference type="HAMAP" id="MF_01331_B">
    <property type="entry name" value="Ribosomal_uL22_B"/>
    <property type="match status" value="1"/>
</dbReference>
<dbReference type="InterPro" id="IPR001063">
    <property type="entry name" value="Ribosomal_uL22"/>
</dbReference>
<dbReference type="InterPro" id="IPR005727">
    <property type="entry name" value="Ribosomal_uL22_bac/chlpt-type"/>
</dbReference>
<dbReference type="InterPro" id="IPR047867">
    <property type="entry name" value="Ribosomal_uL22_bac/org-type"/>
</dbReference>
<dbReference type="InterPro" id="IPR018260">
    <property type="entry name" value="Ribosomal_uL22_CS"/>
</dbReference>
<dbReference type="InterPro" id="IPR036394">
    <property type="entry name" value="Ribosomal_uL22_sf"/>
</dbReference>
<dbReference type="NCBIfam" id="TIGR01044">
    <property type="entry name" value="rplV_bact"/>
    <property type="match status" value="1"/>
</dbReference>
<dbReference type="PANTHER" id="PTHR13501">
    <property type="entry name" value="CHLOROPLAST 50S RIBOSOMAL PROTEIN L22-RELATED"/>
    <property type="match status" value="1"/>
</dbReference>
<dbReference type="PANTHER" id="PTHR13501:SF8">
    <property type="entry name" value="LARGE RIBOSOMAL SUBUNIT PROTEIN UL22M"/>
    <property type="match status" value="1"/>
</dbReference>
<dbReference type="Pfam" id="PF00237">
    <property type="entry name" value="Ribosomal_L22"/>
    <property type="match status" value="1"/>
</dbReference>
<dbReference type="SUPFAM" id="SSF54843">
    <property type="entry name" value="Ribosomal protein L22"/>
    <property type="match status" value="1"/>
</dbReference>
<dbReference type="PROSITE" id="PS00464">
    <property type="entry name" value="RIBOSOMAL_L22"/>
    <property type="match status" value="1"/>
</dbReference>
<sequence>METLAQHRHARSSAQKVRLVADLIRGKKVSQALDILTYTNKKAAVLVKKVLESAIANAEHNDGADIDDLKVAKIFVDEGPSMKRIMPRAKGRADRILKRTSHITVVVSDR</sequence>
<feature type="chain" id="PRO_1000142273" description="Large ribosomal subunit protein uL22">
    <location>
        <begin position="1"/>
        <end position="110"/>
    </location>
</feature>
<gene>
    <name evidence="1" type="primary">rplV</name>
    <name type="ordered locus">KPK_0404</name>
</gene>
<accession>B5XN99</accession>
<name>RL22_KLEP3</name>
<protein>
    <recommendedName>
        <fullName evidence="1">Large ribosomal subunit protein uL22</fullName>
    </recommendedName>
    <alternativeName>
        <fullName evidence="2">50S ribosomal protein L22</fullName>
    </alternativeName>
</protein>
<keyword id="KW-0687">Ribonucleoprotein</keyword>
<keyword id="KW-0689">Ribosomal protein</keyword>
<keyword id="KW-0694">RNA-binding</keyword>
<keyword id="KW-0699">rRNA-binding</keyword>